<proteinExistence type="inferred from homology"/>
<dbReference type="EMBL" id="X70827">
    <property type="status" value="NOT_ANNOTATED_CDS"/>
    <property type="molecule type" value="Genomic_DNA"/>
</dbReference>
<dbReference type="SMR" id="P0DOD0"/>
<dbReference type="Proteomes" id="UP000009253">
    <property type="component" value="Genome"/>
</dbReference>
<dbReference type="GO" id="GO:0042025">
    <property type="term" value="C:host cell nucleus"/>
    <property type="evidence" value="ECO:0007669"/>
    <property type="project" value="UniProtKB-SubCell"/>
</dbReference>
<dbReference type="GO" id="GO:0003677">
    <property type="term" value="F:DNA binding"/>
    <property type="evidence" value="ECO:0007669"/>
    <property type="project" value="InterPro"/>
</dbReference>
<dbReference type="GO" id="GO:0003700">
    <property type="term" value="F:DNA-binding transcription factor activity"/>
    <property type="evidence" value="ECO:0007669"/>
    <property type="project" value="InterPro"/>
</dbReference>
<dbReference type="GO" id="GO:0006275">
    <property type="term" value="P:regulation of DNA replication"/>
    <property type="evidence" value="ECO:0007669"/>
    <property type="project" value="InterPro"/>
</dbReference>
<dbReference type="Gene3D" id="3.30.70.330">
    <property type="match status" value="1"/>
</dbReference>
<dbReference type="InterPro" id="IPR035975">
    <property type="entry name" value="E2/EBNA1_C_sf"/>
</dbReference>
<dbReference type="InterPro" id="IPR012677">
    <property type="entry name" value="Nucleotide-bd_a/b_plait_sf"/>
</dbReference>
<dbReference type="InterPro" id="IPR000427">
    <property type="entry name" value="Papillomavirus_E2_C"/>
</dbReference>
<dbReference type="Pfam" id="PF00511">
    <property type="entry name" value="PPV_E2_C"/>
    <property type="match status" value="1"/>
</dbReference>
<dbReference type="SUPFAM" id="SSF54957">
    <property type="entry name" value="Viral DNA-binding domain"/>
    <property type="match status" value="1"/>
</dbReference>
<reference key="1">
    <citation type="journal article" date="1993" name="Virology">
        <title>Two novel types of human papillomavirus, HPV 63 and HPV 65: comparisons of their clinical and histological features and DNA sequences to other HPV types.</title>
        <authorList>
            <person name="Egawa K."/>
            <person name="Delius H."/>
            <person name="Matsukura T."/>
            <person name="Kawashima M."/>
            <person name="de Villiers E.M."/>
        </authorList>
    </citation>
    <scope>NUCLEOTIDE SEQUENCE [GENOMIC DNA]</scope>
</reference>
<keyword id="KW-1048">Host nucleus</keyword>
<keyword id="KW-1185">Reference proteome</keyword>
<organism>
    <name type="scientific">Human papillomavirus 4</name>
    <dbReference type="NCBI Taxonomy" id="10617"/>
    <lineage>
        <taxon>Viruses</taxon>
        <taxon>Monodnaviria</taxon>
        <taxon>Shotokuvirae</taxon>
        <taxon>Cossaviricota</taxon>
        <taxon>Papovaviricetes</taxon>
        <taxon>Zurhausenvirales</taxon>
        <taxon>Papillomaviridae</taxon>
        <taxon>Firstpapillomavirinae</taxon>
        <taxon>Gammapapillomavirus</taxon>
        <taxon>Gammapapillomavirus 1</taxon>
    </lineage>
</organism>
<evidence type="ECO:0000250" key="1">
    <source>
        <dbReference type="UniProtKB" id="P0DKA0"/>
    </source>
</evidence>
<evidence type="ECO:0000256" key="2">
    <source>
        <dbReference type="SAM" id="MobiDB-lite"/>
    </source>
</evidence>
<evidence type="ECO:0000305" key="3"/>
<organismHost>
    <name type="scientific">Homo sapiens</name>
    <name type="common">Human</name>
    <dbReference type="NCBI Taxonomy" id="9606"/>
</organismHost>
<protein>
    <recommendedName>
        <fullName>Protein E8^E2C</fullName>
    </recommendedName>
</protein>
<name>VE8E2_HPV04</name>
<sequence>MKLKILLHSSTYSSSFDTEEQQLPGPSTSYSEVTEQASPTRRRKPRKSDATSTTSPETEGVRLRRRRREGKSGPGSGETPRKRRRGGGRGGGETELGSAPSPAEVGSRHRQVERQGLSRLGLLQAEARDPPMILLKGTANSLKCWRYRKVNSNCCNFLFMSTVWNWVGDCSHNHSRMLIAFDSTDQRDAFVKHNLFPKLCTYTYGSLNSL</sequence>
<accession>P0DOD0</accession>
<feature type="chain" id="PRO_0000438755" description="Protein E8^E2C">
    <location>
        <begin position="1"/>
        <end position="210"/>
    </location>
</feature>
<feature type="region of interest" description="Disordered" evidence="2">
    <location>
        <begin position="1"/>
        <end position="112"/>
    </location>
</feature>
<feature type="compositionally biased region" description="Polar residues" evidence="2">
    <location>
        <begin position="24"/>
        <end position="39"/>
    </location>
</feature>
<comment type="function">
    <text evidence="1">Plays a role in limiting the replication of viral DNA in keratinocytes. Recruits the host NCoR/SMRT complex to viral replication foci to mediate repression of both viral replication and transcription.</text>
</comment>
<comment type="subcellular location">
    <subcellularLocation>
        <location evidence="1">Host nucleus</location>
    </subcellularLocation>
</comment>
<comment type="similarity">
    <text evidence="3">Belongs to the papillomaviridae E8^E2C protein family.</text>
</comment>